<gene>
    <name evidence="1" type="primary">secA</name>
    <name type="ordered locus">Aasi_0806</name>
</gene>
<dbReference type="EC" id="7.4.2.8" evidence="1"/>
<dbReference type="EMBL" id="CP001102">
    <property type="protein sequence ID" value="ACE06182.1"/>
    <property type="molecule type" value="Genomic_DNA"/>
</dbReference>
<dbReference type="RefSeq" id="WP_012472951.1">
    <property type="nucleotide sequence ID" value="NC_010830.1"/>
</dbReference>
<dbReference type="SMR" id="B3ESI0"/>
<dbReference type="STRING" id="452471.Aasi_0806"/>
<dbReference type="KEGG" id="aas:Aasi_0806"/>
<dbReference type="eggNOG" id="COG0653">
    <property type="taxonomic scope" value="Bacteria"/>
</dbReference>
<dbReference type="HOGENOM" id="CLU_005314_0_0_10"/>
<dbReference type="OrthoDB" id="9805579at2"/>
<dbReference type="Proteomes" id="UP000001227">
    <property type="component" value="Chromosome"/>
</dbReference>
<dbReference type="GO" id="GO:0031522">
    <property type="term" value="C:cell envelope Sec protein transport complex"/>
    <property type="evidence" value="ECO:0007669"/>
    <property type="project" value="TreeGrafter"/>
</dbReference>
<dbReference type="GO" id="GO:0005829">
    <property type="term" value="C:cytosol"/>
    <property type="evidence" value="ECO:0007669"/>
    <property type="project" value="TreeGrafter"/>
</dbReference>
<dbReference type="GO" id="GO:0005886">
    <property type="term" value="C:plasma membrane"/>
    <property type="evidence" value="ECO:0007669"/>
    <property type="project" value="UniProtKB-SubCell"/>
</dbReference>
<dbReference type="GO" id="GO:0005524">
    <property type="term" value="F:ATP binding"/>
    <property type="evidence" value="ECO:0007669"/>
    <property type="project" value="UniProtKB-UniRule"/>
</dbReference>
<dbReference type="GO" id="GO:0008564">
    <property type="term" value="F:protein-exporting ATPase activity"/>
    <property type="evidence" value="ECO:0007669"/>
    <property type="project" value="UniProtKB-EC"/>
</dbReference>
<dbReference type="GO" id="GO:0065002">
    <property type="term" value="P:intracellular protein transmembrane transport"/>
    <property type="evidence" value="ECO:0007669"/>
    <property type="project" value="UniProtKB-UniRule"/>
</dbReference>
<dbReference type="GO" id="GO:0017038">
    <property type="term" value="P:protein import"/>
    <property type="evidence" value="ECO:0007669"/>
    <property type="project" value="InterPro"/>
</dbReference>
<dbReference type="GO" id="GO:0006605">
    <property type="term" value="P:protein targeting"/>
    <property type="evidence" value="ECO:0007669"/>
    <property type="project" value="UniProtKB-UniRule"/>
</dbReference>
<dbReference type="GO" id="GO:0043952">
    <property type="term" value="P:protein transport by the Sec complex"/>
    <property type="evidence" value="ECO:0007669"/>
    <property type="project" value="TreeGrafter"/>
</dbReference>
<dbReference type="CDD" id="cd17928">
    <property type="entry name" value="DEXDc_SecA"/>
    <property type="match status" value="1"/>
</dbReference>
<dbReference type="CDD" id="cd18803">
    <property type="entry name" value="SF2_C_secA"/>
    <property type="match status" value="1"/>
</dbReference>
<dbReference type="FunFam" id="3.40.50.300:FF:000246">
    <property type="entry name" value="Preprotein translocase subunit SecA"/>
    <property type="match status" value="1"/>
</dbReference>
<dbReference type="FunFam" id="3.40.50.300:FF:000694">
    <property type="entry name" value="Preprotein translocase subunit SecA"/>
    <property type="match status" value="1"/>
</dbReference>
<dbReference type="Gene3D" id="1.10.3060.10">
    <property type="entry name" value="Helical scaffold and wing domains of SecA"/>
    <property type="match status" value="1"/>
</dbReference>
<dbReference type="Gene3D" id="3.40.50.300">
    <property type="entry name" value="P-loop containing nucleotide triphosphate hydrolases"/>
    <property type="match status" value="3"/>
</dbReference>
<dbReference type="Gene3D" id="3.90.1440.10">
    <property type="entry name" value="SecA, preprotein cross-linking domain"/>
    <property type="match status" value="1"/>
</dbReference>
<dbReference type="HAMAP" id="MF_01382">
    <property type="entry name" value="SecA"/>
    <property type="match status" value="1"/>
</dbReference>
<dbReference type="InterPro" id="IPR014001">
    <property type="entry name" value="Helicase_ATP-bd"/>
</dbReference>
<dbReference type="InterPro" id="IPR001650">
    <property type="entry name" value="Helicase_C-like"/>
</dbReference>
<dbReference type="InterPro" id="IPR027417">
    <property type="entry name" value="P-loop_NTPase"/>
</dbReference>
<dbReference type="InterPro" id="IPR000185">
    <property type="entry name" value="SecA"/>
</dbReference>
<dbReference type="InterPro" id="IPR020937">
    <property type="entry name" value="SecA_CS"/>
</dbReference>
<dbReference type="InterPro" id="IPR011115">
    <property type="entry name" value="SecA_DEAD"/>
</dbReference>
<dbReference type="InterPro" id="IPR014018">
    <property type="entry name" value="SecA_motor_DEAD"/>
</dbReference>
<dbReference type="InterPro" id="IPR011130">
    <property type="entry name" value="SecA_preprotein_X-link_dom"/>
</dbReference>
<dbReference type="InterPro" id="IPR044722">
    <property type="entry name" value="SecA_SF2_C"/>
</dbReference>
<dbReference type="InterPro" id="IPR011116">
    <property type="entry name" value="SecA_Wing/Scaffold"/>
</dbReference>
<dbReference type="InterPro" id="IPR036266">
    <property type="entry name" value="SecA_Wing/Scaffold_sf"/>
</dbReference>
<dbReference type="InterPro" id="IPR036670">
    <property type="entry name" value="SecA_X-link_sf"/>
</dbReference>
<dbReference type="NCBIfam" id="NF009536">
    <property type="entry name" value="PRK12901.1"/>
    <property type="match status" value="1"/>
</dbReference>
<dbReference type="PANTHER" id="PTHR30612:SF0">
    <property type="entry name" value="CHLOROPLAST PROTEIN-TRANSPORTING ATPASE"/>
    <property type="match status" value="1"/>
</dbReference>
<dbReference type="PANTHER" id="PTHR30612">
    <property type="entry name" value="SECA INNER MEMBRANE COMPONENT OF SEC PROTEIN SECRETION SYSTEM"/>
    <property type="match status" value="1"/>
</dbReference>
<dbReference type="Pfam" id="PF21090">
    <property type="entry name" value="P-loop_SecA"/>
    <property type="match status" value="1"/>
</dbReference>
<dbReference type="Pfam" id="PF07517">
    <property type="entry name" value="SecA_DEAD"/>
    <property type="match status" value="1"/>
</dbReference>
<dbReference type="Pfam" id="PF01043">
    <property type="entry name" value="SecA_PP_bind"/>
    <property type="match status" value="1"/>
</dbReference>
<dbReference type="Pfam" id="PF07516">
    <property type="entry name" value="SecA_SW"/>
    <property type="match status" value="1"/>
</dbReference>
<dbReference type="PRINTS" id="PR00906">
    <property type="entry name" value="SECA"/>
</dbReference>
<dbReference type="SMART" id="SM00957">
    <property type="entry name" value="SecA_DEAD"/>
    <property type="match status" value="1"/>
</dbReference>
<dbReference type="SMART" id="SM00958">
    <property type="entry name" value="SecA_PP_bind"/>
    <property type="match status" value="1"/>
</dbReference>
<dbReference type="SUPFAM" id="SSF81886">
    <property type="entry name" value="Helical scaffold and wing domains of SecA"/>
    <property type="match status" value="1"/>
</dbReference>
<dbReference type="SUPFAM" id="SSF52540">
    <property type="entry name" value="P-loop containing nucleoside triphosphate hydrolases"/>
    <property type="match status" value="2"/>
</dbReference>
<dbReference type="SUPFAM" id="SSF81767">
    <property type="entry name" value="Pre-protein crosslinking domain of SecA"/>
    <property type="match status" value="1"/>
</dbReference>
<dbReference type="PROSITE" id="PS01312">
    <property type="entry name" value="SECA"/>
    <property type="match status" value="1"/>
</dbReference>
<dbReference type="PROSITE" id="PS51196">
    <property type="entry name" value="SECA_MOTOR_DEAD"/>
    <property type="match status" value="1"/>
</dbReference>
<keyword id="KW-0067">ATP-binding</keyword>
<keyword id="KW-0997">Cell inner membrane</keyword>
<keyword id="KW-1003">Cell membrane</keyword>
<keyword id="KW-0963">Cytoplasm</keyword>
<keyword id="KW-0472">Membrane</keyword>
<keyword id="KW-0547">Nucleotide-binding</keyword>
<keyword id="KW-0653">Protein transport</keyword>
<keyword id="KW-1185">Reference proteome</keyword>
<keyword id="KW-1278">Translocase</keyword>
<keyword id="KW-0811">Translocation</keyword>
<keyword id="KW-0813">Transport</keyword>
<protein>
    <recommendedName>
        <fullName evidence="1">Protein translocase subunit SecA</fullName>
        <ecNumber evidence="1">7.4.2.8</ecNumber>
    </recommendedName>
</protein>
<comment type="function">
    <text evidence="1">Part of the Sec protein translocase complex. Interacts with the SecYEG preprotein conducting channel. Has a central role in coupling the hydrolysis of ATP to the transfer of proteins into and across the cell membrane, serving as an ATP-driven molecular motor driving the stepwise translocation of polypeptide chains across the membrane.</text>
</comment>
<comment type="catalytic activity">
    <reaction evidence="1">
        <text>ATP + H2O + cellular proteinSide 1 = ADP + phosphate + cellular proteinSide 2.</text>
        <dbReference type="EC" id="7.4.2.8"/>
    </reaction>
</comment>
<comment type="subunit">
    <text evidence="1">Monomer and homodimer. Part of the essential Sec protein translocation apparatus which comprises SecA, SecYEG and auxiliary proteins SecDF. Other proteins may also be involved.</text>
</comment>
<comment type="subcellular location">
    <subcellularLocation>
        <location evidence="1">Cell inner membrane</location>
        <topology evidence="1">Peripheral membrane protein</topology>
        <orientation evidence="1">Cytoplasmic side</orientation>
    </subcellularLocation>
    <subcellularLocation>
        <location evidence="1">Cytoplasm</location>
    </subcellularLocation>
    <text evidence="1">Distribution is 50-50.</text>
</comment>
<comment type="similarity">
    <text evidence="1">Belongs to the SecA family.</text>
</comment>
<organism>
    <name type="scientific">Amoebophilus asiaticus (strain 5a2)</name>
    <dbReference type="NCBI Taxonomy" id="452471"/>
    <lineage>
        <taxon>Bacteria</taxon>
        <taxon>Pseudomonadati</taxon>
        <taxon>Bacteroidota</taxon>
        <taxon>Cytophagia</taxon>
        <taxon>Cytophagales</taxon>
        <taxon>Amoebophilaceae</taxon>
        <taxon>Candidatus Amoebophilus</taxon>
    </lineage>
</organism>
<reference key="1">
    <citation type="journal article" date="2010" name="J. Bacteriol.">
        <title>The genome of the amoeba symbiont 'Candidatus Amoebophilus asiaticus' reveals common mechanisms for host cell interaction among amoeba-associated bacteria.</title>
        <authorList>
            <person name="Schmitz-Esser S."/>
            <person name="Tischler P."/>
            <person name="Arnold R."/>
            <person name="Montanaro J."/>
            <person name="Wagner M."/>
            <person name="Rattei T."/>
            <person name="Horn M."/>
        </authorList>
    </citation>
    <scope>NUCLEOTIDE SEQUENCE [LARGE SCALE GENOMIC DNA]</scope>
    <source>
        <strain>5a2</strain>
    </source>
</reference>
<sequence>MLKLFTKLFGTKSERDLKSIRPYVEKINLEYEKLVSLTNDELRKKTDSLKQYIKVETQEFIGELEIRERQLEATTQLTPKEVEDLYIQISRIKEQYNTQLEKVLLDILPQAFAIVKETARRFKENEQLIVTATGYDRELAITEKHIDIEGDQAIWKNQWEVTGHLLTWDMVHYDEQLIGGVILHKGKIAEMATGEGKTLVATLPTFLNALVGKGVHIVTVNEYLAKRDAAWMKPIYQFHGFTVACIEETSPYSAARREAYQADITYGTNNEFGFDYLRDNMASQQEEVVQREHHYAIVDEVDSVLIDDARTPLIISGPVEKGNEQEYITFNPRIKRLYEAQKQIVNQFLQEAKSQMVAGKNDEAGLPLFRAYRGLPKYKPLIKYLSEPGVKQLLHKTENYYIQDNSRMMPEADEPLLFTIDEKHNTVELTEKGLEYITQQGEDPDFFILPDTATAVGEIESDAGLDNLEKEQKKQILAQEYAIKSQRIHAVQQLLKAYALFEKDIDYILVDGKAKIVDEQTGRVLEGRRYSDGLHQAIEAKEEIKIEKASQTYATITLQNYFRLYHKLAGMTGTAETEAGEFYDIYHLDVVVTPTHKPVVREDKDDKVYKTVREKFNAIIEEITVLANQGRPVLVGTTSVEISELVSKMLNLRKIKHQVLNAKHHQKEAEIVAEAGKPGTVTIATNMAGRGTDIKLSPEAKAAGGLAIIGTERHESRRVDRQLRGRAGRQGDVGSSQFFVSLEDSLMRLFISDRIAKIMDSLGLKEGEMIQHSMITRSIERAQKKVEQNNYAYRKRLLEYDNELNKQREIIYRRRRDALLGHRLGAEVNAMLFEVAKSSVMQQGVKANYHVLATKFSYITGTLPPITEEEFHTYDIQKITDIIYQAFLSSYMNRLAVFKEQGIAVQMNLPDHIADIRAEYLSFSFSDSERRLEVPVKIADFMDNAGEAILKSLERVAIIYYLDRYWQEHLRYMDELRHSVQNASYEQKDPLLIYKFESYALFSTMIARANESIITYLLKANLLLYKASDEKPKMVEKNKRIELEESKQDIISLLRERASNSSEEILKPQPIKSQKIANRNERVTVQYEDGTIKENVKFKSVEEDIANGKCILLETR</sequence>
<evidence type="ECO:0000255" key="1">
    <source>
        <dbReference type="HAMAP-Rule" id="MF_01382"/>
    </source>
</evidence>
<proteinExistence type="inferred from homology"/>
<name>SECA_AMOA5</name>
<feature type="chain" id="PRO_1000144972" description="Protein translocase subunit SecA">
    <location>
        <begin position="1"/>
        <end position="1116"/>
    </location>
</feature>
<feature type="binding site" evidence="1">
    <location>
        <position position="176"/>
    </location>
    <ligand>
        <name>ATP</name>
        <dbReference type="ChEBI" id="CHEBI:30616"/>
    </ligand>
</feature>
<feature type="binding site" evidence="1">
    <location>
        <begin position="194"/>
        <end position="198"/>
    </location>
    <ligand>
        <name>ATP</name>
        <dbReference type="ChEBI" id="CHEBI:30616"/>
    </ligand>
</feature>
<feature type="binding site" evidence="1">
    <location>
        <position position="693"/>
    </location>
    <ligand>
        <name>ATP</name>
        <dbReference type="ChEBI" id="CHEBI:30616"/>
    </ligand>
</feature>
<accession>B3ESI0</accession>